<accession>Q8RLB6</accession>
<reference key="1">
    <citation type="journal article" date="2003" name="Eur. J. Biochem.">
        <title>Factors involved in the assembly of a functional molybdopyranopterin center in recombinant Comamonas acidovorans xanthine dehydrogenase.</title>
        <authorList>
            <person name="Ivanov N.V."/>
            <person name="Hubalek F."/>
            <person name="Trani M."/>
            <person name="Edmondson D.E."/>
        </authorList>
    </citation>
    <scope>NUCLEOTIDE SEQUENCE [GENOMIC DNA]</scope>
    <source>
        <strain>ATCC 15668 / DSM 39 / BCRC 14819 / JCM 5833 / NBRC 14950 / NCIMB 9681 / NCTC 10683 / 2167</strain>
    </source>
</reference>
<feature type="chain" id="PRO_0000279909" description="Aliphatic sulfonates import ATP-binding protein SsuB">
    <location>
        <begin position="1"/>
        <end position="241"/>
    </location>
</feature>
<feature type="domain" description="ABC transporter" evidence="1">
    <location>
        <begin position="10"/>
        <end position="226"/>
    </location>
</feature>
<feature type="binding site" evidence="1">
    <location>
        <begin position="42"/>
        <end position="49"/>
    </location>
    <ligand>
        <name>ATP</name>
        <dbReference type="ChEBI" id="CHEBI:30616"/>
    </ligand>
</feature>
<gene>
    <name evidence="1" type="primary">ssuB</name>
</gene>
<keyword id="KW-0067">ATP-binding</keyword>
<keyword id="KW-0997">Cell inner membrane</keyword>
<keyword id="KW-1003">Cell membrane</keyword>
<keyword id="KW-0472">Membrane</keyword>
<keyword id="KW-0547">Nucleotide-binding</keyword>
<keyword id="KW-1278">Translocase</keyword>
<keyword id="KW-0813">Transport</keyword>
<proteinExistence type="inferred from homology"/>
<evidence type="ECO:0000255" key="1">
    <source>
        <dbReference type="HAMAP-Rule" id="MF_01724"/>
    </source>
</evidence>
<sequence length="241" mass="25984">MNRPSLAGAVHLHGFSRSFHGKQVLDDLGLDIAPGQFVALLGESGSGKTTLLRALAGLDVEARSSGTAVAHGNVSVLFQDSRLLPWLTVLDNLTLGLDAQAVRPAAAQLLREVGLADKAAAWPASLSGGQKQRAALARSLLREPHVLLADEPFGALDALTRLRMQGLLRRMVERVRPTVILVTHDVDESLLLADRILVLRDGKIAEDHALDLAHPRRPDHPAFMQLRATLLRSLGVEAEFV</sequence>
<protein>
    <recommendedName>
        <fullName evidence="1">Aliphatic sulfonates import ATP-binding protein SsuB</fullName>
        <ecNumber evidence="1">7.6.2.14</ecNumber>
    </recommendedName>
</protein>
<dbReference type="EC" id="7.6.2.14" evidence="1"/>
<dbReference type="EMBL" id="AY082333">
    <property type="protein sequence ID" value="AAL92576.1"/>
    <property type="molecule type" value="Genomic_DNA"/>
</dbReference>
<dbReference type="SMR" id="Q8RLB6"/>
<dbReference type="GO" id="GO:0005886">
    <property type="term" value="C:plasma membrane"/>
    <property type="evidence" value="ECO:0007669"/>
    <property type="project" value="UniProtKB-SubCell"/>
</dbReference>
<dbReference type="GO" id="GO:0005524">
    <property type="term" value="F:ATP binding"/>
    <property type="evidence" value="ECO:0007669"/>
    <property type="project" value="UniProtKB-KW"/>
</dbReference>
<dbReference type="GO" id="GO:0016887">
    <property type="term" value="F:ATP hydrolysis activity"/>
    <property type="evidence" value="ECO:0007669"/>
    <property type="project" value="InterPro"/>
</dbReference>
<dbReference type="Gene3D" id="3.40.50.300">
    <property type="entry name" value="P-loop containing nucleotide triphosphate hydrolases"/>
    <property type="match status" value="1"/>
</dbReference>
<dbReference type="InterPro" id="IPR003593">
    <property type="entry name" value="AAA+_ATPase"/>
</dbReference>
<dbReference type="InterPro" id="IPR003439">
    <property type="entry name" value="ABC_transporter-like_ATP-bd"/>
</dbReference>
<dbReference type="InterPro" id="IPR017871">
    <property type="entry name" value="ABC_transporter-like_CS"/>
</dbReference>
<dbReference type="InterPro" id="IPR050166">
    <property type="entry name" value="ABC_transporter_ATP-bind"/>
</dbReference>
<dbReference type="InterPro" id="IPR027417">
    <property type="entry name" value="P-loop_NTPase"/>
</dbReference>
<dbReference type="PANTHER" id="PTHR42788:SF17">
    <property type="entry name" value="ALIPHATIC SULFONATES IMPORT ATP-BINDING PROTEIN SSUB"/>
    <property type="match status" value="1"/>
</dbReference>
<dbReference type="PANTHER" id="PTHR42788">
    <property type="entry name" value="TAURINE IMPORT ATP-BINDING PROTEIN-RELATED"/>
    <property type="match status" value="1"/>
</dbReference>
<dbReference type="Pfam" id="PF00005">
    <property type="entry name" value="ABC_tran"/>
    <property type="match status" value="1"/>
</dbReference>
<dbReference type="SMART" id="SM00382">
    <property type="entry name" value="AAA"/>
    <property type="match status" value="1"/>
</dbReference>
<dbReference type="SUPFAM" id="SSF52540">
    <property type="entry name" value="P-loop containing nucleoside triphosphate hydrolases"/>
    <property type="match status" value="1"/>
</dbReference>
<dbReference type="PROSITE" id="PS00211">
    <property type="entry name" value="ABC_TRANSPORTER_1"/>
    <property type="match status" value="1"/>
</dbReference>
<dbReference type="PROSITE" id="PS50893">
    <property type="entry name" value="ABC_TRANSPORTER_2"/>
    <property type="match status" value="1"/>
</dbReference>
<dbReference type="PROSITE" id="PS51291">
    <property type="entry name" value="SSUB"/>
    <property type="match status" value="1"/>
</dbReference>
<comment type="function">
    <text evidence="1">Part of the ABC transporter complex SsuABC involved in aliphatic sulfonates import. Responsible for energy coupling to the transport system.</text>
</comment>
<comment type="catalytic activity">
    <reaction evidence="1">
        <text>ATP + H2O + aliphatic sulfonate-[sulfonate-binding protein]Side 1 = ADP + phosphate + aliphatic sulfonateSide 2 + [sulfonate-binding protein]Side 1.</text>
        <dbReference type="EC" id="7.6.2.14"/>
    </reaction>
</comment>
<comment type="subunit">
    <text evidence="1">The complex is composed of two ATP-binding proteins (SsuB), two transmembrane proteins (SsuC) and a solute-binding protein (SsuA).</text>
</comment>
<comment type="subcellular location">
    <subcellularLocation>
        <location evidence="1">Cell inner membrane</location>
        <topology evidence="1">Peripheral membrane protein</topology>
    </subcellularLocation>
</comment>
<comment type="similarity">
    <text evidence="1">Belongs to the ABC transporter superfamily. Aliphatic sulfonates importer (TC 3.A.1.17.2) family.</text>
</comment>
<name>SSUB_DELAC</name>
<organism>
    <name type="scientific">Delftia acidovorans</name>
    <name type="common">Pseudomonas acidovorans</name>
    <name type="synonym">Comamonas acidovorans</name>
    <dbReference type="NCBI Taxonomy" id="80866"/>
    <lineage>
        <taxon>Bacteria</taxon>
        <taxon>Pseudomonadati</taxon>
        <taxon>Pseudomonadota</taxon>
        <taxon>Betaproteobacteria</taxon>
        <taxon>Burkholderiales</taxon>
        <taxon>Comamonadaceae</taxon>
        <taxon>Delftia</taxon>
    </lineage>
</organism>